<gene>
    <name evidence="4" type="primary">CYP72A613</name>
</gene>
<keyword id="KW-0153">Cholesterol metabolism</keyword>
<keyword id="KW-0349">Heme</keyword>
<keyword id="KW-0408">Iron</keyword>
<keyword id="KW-0444">Lipid biosynthesis</keyword>
<keyword id="KW-0443">Lipid metabolism</keyword>
<keyword id="KW-0472">Membrane</keyword>
<keyword id="KW-0479">Metal-binding</keyword>
<keyword id="KW-0503">Monooxygenase</keyword>
<keyword id="KW-0560">Oxidoreductase</keyword>
<keyword id="KW-0752">Steroid biosynthesis</keyword>
<keyword id="KW-0753">Steroid metabolism</keyword>
<keyword id="KW-1207">Sterol metabolism</keyword>
<keyword id="KW-0812">Transmembrane</keyword>
<keyword id="KW-1133">Transmembrane helix</keyword>
<feature type="chain" id="PRO_0000456407" description="Cytochrome P450 CYP72A613">
    <location>
        <begin position="1"/>
        <end position="525"/>
    </location>
</feature>
<feature type="transmembrane region" description="Helical" evidence="2">
    <location>
        <begin position="2"/>
        <end position="22"/>
    </location>
</feature>
<feature type="binding site" description="axial binding residue" evidence="1">
    <location>
        <position position="473"/>
    </location>
    <ligand>
        <name>heme</name>
        <dbReference type="ChEBI" id="CHEBI:30413"/>
    </ligand>
    <ligandPart>
        <name>Fe</name>
        <dbReference type="ChEBI" id="CHEBI:18248"/>
    </ligandPart>
</feature>
<protein>
    <recommendedName>
        <fullName evidence="4">Cytochrome P450 CYP72A613</fullName>
        <shortName evidence="4">PpCYP72A613</shortName>
        <ecNumber evidence="3">1.14.14.-</ecNumber>
    </recommendedName>
</protein>
<sequence>MVFLFPTGTIIIWVLTILLAVIPWYLLNKFWLKPKRFEKLLKAQGLQGDPYKLSALFMNNSKQDYILKLQQEAESKSIGLSKQAAPSIFSSHHQTVHKYGKNSFLWEGTTPSVIITDPDQIKEVFDRIYDFPKQKLRSIAKYFSFGIIKYEGEKWAKHRKIVNPAFHLDKLKGMLPAFSHSCNEMISKWKGLLSADGTCEVDVWPFLQNLTCDVISRTAFGSSYAEGEKIFQLLKKQAFLLVTTLDKNIPLSLWWLLETTTKKRMKEIERDIRESLEGIIEKREKALKNGETTNDDLLGILLQSNHAENQGHGNSKSIGMTTQEMIDECKLFYLVGQETTSTLLVWTMVLLGRYPEWQARARQEVLQVFGNQNQNFEGLSQLKIVTMILYEVLRLYPPAIYFNRALQKDLKLGNLSLPAGTLVSLPIILIHQDNDIWGDDAKEFKPERFAEGIAKATKGQVSYFPFGWGPRICIGQNFALLEAKIAITSLLQNFSFELSPNYVHVPTTVPFFQPKYGASIILHKL</sequence>
<proteinExistence type="evidence at protein level"/>
<evidence type="ECO:0000250" key="1">
    <source>
        <dbReference type="UniProtKB" id="P04798"/>
    </source>
</evidence>
<evidence type="ECO:0000255" key="2"/>
<evidence type="ECO:0000269" key="3">
    <source>
    </source>
</evidence>
<evidence type="ECO:0000303" key="4">
    <source>
    </source>
</evidence>
<evidence type="ECO:0000305" key="5"/>
<dbReference type="EC" id="1.14.14.-" evidence="3"/>
<dbReference type="EMBL" id="MK636708">
    <property type="protein sequence ID" value="QDS03634.1"/>
    <property type="molecule type" value="mRNA"/>
</dbReference>
<dbReference type="SMR" id="A0A517FNC9"/>
<dbReference type="UniPathway" id="UPA00296"/>
<dbReference type="GO" id="GO:0016020">
    <property type="term" value="C:membrane"/>
    <property type="evidence" value="ECO:0007669"/>
    <property type="project" value="UniProtKB-SubCell"/>
</dbReference>
<dbReference type="GO" id="GO:0020037">
    <property type="term" value="F:heme binding"/>
    <property type="evidence" value="ECO:0007669"/>
    <property type="project" value="InterPro"/>
</dbReference>
<dbReference type="GO" id="GO:0005506">
    <property type="term" value="F:iron ion binding"/>
    <property type="evidence" value="ECO:0007669"/>
    <property type="project" value="InterPro"/>
</dbReference>
<dbReference type="GO" id="GO:0004497">
    <property type="term" value="F:monooxygenase activity"/>
    <property type="evidence" value="ECO:0007669"/>
    <property type="project" value="UniProtKB-KW"/>
</dbReference>
<dbReference type="GO" id="GO:0016705">
    <property type="term" value="F:oxidoreductase activity, acting on paired donors, with incorporation or reduction of molecular oxygen"/>
    <property type="evidence" value="ECO:0000314"/>
    <property type="project" value="UniProtKB"/>
</dbReference>
<dbReference type="GO" id="GO:0008203">
    <property type="term" value="P:cholesterol metabolic process"/>
    <property type="evidence" value="ECO:0000314"/>
    <property type="project" value="UniProtKB"/>
</dbReference>
<dbReference type="GO" id="GO:0016135">
    <property type="term" value="P:saponin biosynthetic process"/>
    <property type="evidence" value="ECO:0000314"/>
    <property type="project" value="UniProtKB"/>
</dbReference>
<dbReference type="GO" id="GO:0006694">
    <property type="term" value="P:steroid biosynthetic process"/>
    <property type="evidence" value="ECO:0000314"/>
    <property type="project" value="UniProtKB"/>
</dbReference>
<dbReference type="CDD" id="cd20642">
    <property type="entry name" value="CYP72"/>
    <property type="match status" value="1"/>
</dbReference>
<dbReference type="FunFam" id="1.10.630.10:FF:000029">
    <property type="entry name" value="Cytochrome P450 734A1"/>
    <property type="match status" value="1"/>
</dbReference>
<dbReference type="Gene3D" id="1.10.630.10">
    <property type="entry name" value="Cytochrome P450"/>
    <property type="match status" value="1"/>
</dbReference>
<dbReference type="InterPro" id="IPR001128">
    <property type="entry name" value="Cyt_P450"/>
</dbReference>
<dbReference type="InterPro" id="IPR017972">
    <property type="entry name" value="Cyt_P450_CS"/>
</dbReference>
<dbReference type="InterPro" id="IPR002401">
    <property type="entry name" value="Cyt_P450_E_grp-I"/>
</dbReference>
<dbReference type="InterPro" id="IPR036396">
    <property type="entry name" value="Cyt_P450_sf"/>
</dbReference>
<dbReference type="InterPro" id="IPR050665">
    <property type="entry name" value="Cytochrome_P450_Monooxygen"/>
</dbReference>
<dbReference type="PANTHER" id="PTHR24282:SF253">
    <property type="entry name" value="11-OXO-BETA-AMYRIN 30-OXIDASE"/>
    <property type="match status" value="1"/>
</dbReference>
<dbReference type="PANTHER" id="PTHR24282">
    <property type="entry name" value="CYTOCHROME P450 FAMILY MEMBER"/>
    <property type="match status" value="1"/>
</dbReference>
<dbReference type="Pfam" id="PF00067">
    <property type="entry name" value="p450"/>
    <property type="match status" value="1"/>
</dbReference>
<dbReference type="PRINTS" id="PR00463">
    <property type="entry name" value="EP450I"/>
</dbReference>
<dbReference type="PRINTS" id="PR00385">
    <property type="entry name" value="P450"/>
</dbReference>
<dbReference type="SUPFAM" id="SSF48264">
    <property type="entry name" value="Cytochrome P450"/>
    <property type="match status" value="1"/>
</dbReference>
<dbReference type="PROSITE" id="PS00086">
    <property type="entry name" value="CYTOCHROME_P450"/>
    <property type="match status" value="1"/>
</dbReference>
<comment type="function">
    <text evidence="3">Involved in the biosynthesis of spiroketal steroid and saponin natural products from cholesterol such as diosgenin and analogs (e.g. furostanol and spirostanol), plant defense compounds used as main precursors for the industrial production of steroid hormones (PubMed:31324795). During the 5,6-spiroketalization of cholesterol, may catalyze the 27-monohydroxylation of furostanol-type steroid to an intermediate product that undergoes a stereospecific formation of the terminal heterocycle to yield diosgenin (PubMed:31324795).</text>
</comment>
<comment type="pathway">
    <text evidence="3">Steroid metabolism; cholesterol metabolism.</text>
</comment>
<comment type="subcellular location">
    <subcellularLocation>
        <location evidence="2">Membrane</location>
        <topology evidence="2">Single-pass membrane protein</topology>
    </subcellularLocation>
</comment>
<comment type="tissue specificity">
    <text evidence="3">Mainly expressed in leaves and seed pods and, to a lower extent, in flowers and stems.</text>
</comment>
<comment type="similarity">
    <text evidence="5">Belongs to the cytochrome P450 family.</text>
</comment>
<name>72A61_TRIFG</name>
<reference key="1">
    <citation type="journal article" date="2019" name="Nat. Commun.">
        <title>Repeated evolution of cytochrome P450-mediated spiroketal steroid biosynthesis in plants.</title>
        <authorList>
            <person name="Christ B."/>
            <person name="Xu C."/>
            <person name="Xu M."/>
            <person name="Li F.-S."/>
            <person name="Wada N."/>
            <person name="Mitchell A.J."/>
            <person name="Han X.-L."/>
            <person name="Wen M.-L."/>
            <person name="Fujita M."/>
            <person name="Weng J.-K."/>
        </authorList>
    </citation>
    <scope>NUCLEOTIDE SEQUENCE [MRNA]</scope>
    <scope>FUNCTION</scope>
    <scope>CATALYTIC ACTIVITY</scope>
    <scope>PATHWAY</scope>
    <scope>TISSUE SPECIFICITY</scope>
    <source>
        <tissue>Flower</tissue>
        <tissue>Leaf</tissue>
        <tissue>Pod</tissue>
        <tissue>Stem</tissue>
    </source>
</reference>
<accession>A0A517FNC9</accession>
<organism>
    <name type="scientific">Trigonella foenum-graecum</name>
    <name type="common">Fenugreek</name>
    <dbReference type="NCBI Taxonomy" id="78534"/>
    <lineage>
        <taxon>Eukaryota</taxon>
        <taxon>Viridiplantae</taxon>
        <taxon>Streptophyta</taxon>
        <taxon>Embryophyta</taxon>
        <taxon>Tracheophyta</taxon>
        <taxon>Spermatophyta</taxon>
        <taxon>Magnoliopsida</taxon>
        <taxon>eudicotyledons</taxon>
        <taxon>Gunneridae</taxon>
        <taxon>Pentapetalae</taxon>
        <taxon>rosids</taxon>
        <taxon>fabids</taxon>
        <taxon>Fabales</taxon>
        <taxon>Fabaceae</taxon>
        <taxon>Papilionoideae</taxon>
        <taxon>50 kb inversion clade</taxon>
        <taxon>NPAAA clade</taxon>
        <taxon>Hologalegina</taxon>
        <taxon>IRL clade</taxon>
        <taxon>Trifolieae</taxon>
        <taxon>Trigonella</taxon>
    </lineage>
</organism>